<accession>Q65VN2</accession>
<name>LEPA_MANSM</name>
<feature type="chain" id="PRO_0000224772" description="Elongation factor 4">
    <location>
        <begin position="1"/>
        <end position="599"/>
    </location>
</feature>
<feature type="domain" description="tr-type G">
    <location>
        <begin position="2"/>
        <end position="184"/>
    </location>
</feature>
<feature type="binding site" evidence="1">
    <location>
        <begin position="14"/>
        <end position="19"/>
    </location>
    <ligand>
        <name>GTP</name>
        <dbReference type="ChEBI" id="CHEBI:37565"/>
    </ligand>
</feature>
<feature type="binding site" evidence="1">
    <location>
        <begin position="131"/>
        <end position="134"/>
    </location>
    <ligand>
        <name>GTP</name>
        <dbReference type="ChEBI" id="CHEBI:37565"/>
    </ligand>
</feature>
<keyword id="KW-0997">Cell inner membrane</keyword>
<keyword id="KW-1003">Cell membrane</keyword>
<keyword id="KW-0342">GTP-binding</keyword>
<keyword id="KW-0378">Hydrolase</keyword>
<keyword id="KW-0472">Membrane</keyword>
<keyword id="KW-0547">Nucleotide-binding</keyword>
<keyword id="KW-0648">Protein biosynthesis</keyword>
<reference key="1">
    <citation type="journal article" date="2004" name="Nat. Biotechnol.">
        <title>The genome sequence of the capnophilic rumen bacterium Mannheimia succiniciproducens.</title>
        <authorList>
            <person name="Hong S.H."/>
            <person name="Kim J.S."/>
            <person name="Lee S.Y."/>
            <person name="In Y.H."/>
            <person name="Choi S.S."/>
            <person name="Rih J.-K."/>
            <person name="Kim C.H."/>
            <person name="Jeong H."/>
            <person name="Hur C.G."/>
            <person name="Kim J.J."/>
        </authorList>
    </citation>
    <scope>NUCLEOTIDE SEQUENCE [LARGE SCALE GENOMIC DNA]</scope>
    <source>
        <strain>KCTC 0769BP / MBEL55E</strain>
    </source>
</reference>
<sequence length="599" mass="66313">MKNIRNFSIIAHIDHGKSTLSDRLIQTCGGLSDREMEAQVLDSMDLERERGITIKAQSVTLNYKAKNGETYQLNFIDTPGHVDFSYEVSRSLAACEGALLVVDAGQGVEAQTLANCYTAIEMNLEVVPILNKIDLPAADPERVAEEIEDIVGIDAMEAVRCSAKTGVGIEDVLEEIVAKIPAPKGDPNAPLQALIIDSWFDNYLGVVSLVRVKNGVLRKGDKIKVMSTGQTYNVDRLGIFTPKQVDKNELECGEVGWVVCAIKDILGAPVGDTLTSQHNPASSVLPGFKKVKPQVYAGLFPVSSDDYEAFRDALGKLSLNDASLFYEPETSTALGFGFRCGFLGLLHMEIIQERLEREYDLDLITTAPTVVYEVELTNGDVIYVDSPSKLPPLNNISEIREPIAECNMLVPQEYLGNVITLCVEKRGVQTNMVYHGNQIALTYEIPMGEVVLDFFDRLKSTSRGYASLDYSFKRFQAADMVRVDIMINGERVDALALIVHKDNAPYRGRELVEKMKELIPRQQFDIAIQAAIGNHIIARSTVKQLRKNVLAKCYGGDVSRKKKLLQKQKEGKKRMKQLGNVEVPQEAFLAILHVGKDSK</sequence>
<protein>
    <recommendedName>
        <fullName evidence="1">Elongation factor 4</fullName>
        <shortName evidence="1">EF-4</shortName>
        <ecNumber evidence="1">3.6.5.n1</ecNumber>
    </recommendedName>
    <alternativeName>
        <fullName evidence="1">Ribosomal back-translocase LepA</fullName>
    </alternativeName>
</protein>
<organism>
    <name type="scientific">Mannheimia succiniciproducens (strain KCTC 0769BP / MBEL55E)</name>
    <dbReference type="NCBI Taxonomy" id="221988"/>
    <lineage>
        <taxon>Bacteria</taxon>
        <taxon>Pseudomonadati</taxon>
        <taxon>Pseudomonadota</taxon>
        <taxon>Gammaproteobacteria</taxon>
        <taxon>Pasteurellales</taxon>
        <taxon>Pasteurellaceae</taxon>
        <taxon>Basfia</taxon>
    </lineage>
</organism>
<gene>
    <name evidence="1" type="primary">lepA</name>
    <name type="ordered locus">MS0371</name>
</gene>
<comment type="function">
    <text evidence="1">Required for accurate and efficient protein synthesis under certain stress conditions. May act as a fidelity factor of the translation reaction, by catalyzing a one-codon backward translocation of tRNAs on improperly translocated ribosomes. Back-translocation proceeds from a post-translocation (POST) complex to a pre-translocation (PRE) complex, thus giving elongation factor G a second chance to translocate the tRNAs correctly. Binds to ribosomes in a GTP-dependent manner.</text>
</comment>
<comment type="catalytic activity">
    <reaction evidence="1">
        <text>GTP + H2O = GDP + phosphate + H(+)</text>
        <dbReference type="Rhea" id="RHEA:19669"/>
        <dbReference type="ChEBI" id="CHEBI:15377"/>
        <dbReference type="ChEBI" id="CHEBI:15378"/>
        <dbReference type="ChEBI" id="CHEBI:37565"/>
        <dbReference type="ChEBI" id="CHEBI:43474"/>
        <dbReference type="ChEBI" id="CHEBI:58189"/>
        <dbReference type="EC" id="3.6.5.n1"/>
    </reaction>
</comment>
<comment type="subcellular location">
    <subcellularLocation>
        <location evidence="1">Cell inner membrane</location>
        <topology evidence="1">Peripheral membrane protein</topology>
        <orientation evidence="1">Cytoplasmic side</orientation>
    </subcellularLocation>
</comment>
<comment type="similarity">
    <text evidence="1">Belongs to the TRAFAC class translation factor GTPase superfamily. Classic translation factor GTPase family. LepA subfamily.</text>
</comment>
<comment type="sequence caution" evidence="2">
    <conflict type="erroneous initiation">
        <sequence resource="EMBL-CDS" id="AAU36978"/>
    </conflict>
</comment>
<proteinExistence type="inferred from homology"/>
<evidence type="ECO:0000255" key="1">
    <source>
        <dbReference type="HAMAP-Rule" id="MF_00071"/>
    </source>
</evidence>
<evidence type="ECO:0000305" key="2"/>
<dbReference type="EC" id="3.6.5.n1" evidence="1"/>
<dbReference type="EMBL" id="AE016827">
    <property type="protein sequence ID" value="AAU36978.1"/>
    <property type="status" value="ALT_INIT"/>
    <property type="molecule type" value="Genomic_DNA"/>
</dbReference>
<dbReference type="RefSeq" id="WP_041639510.1">
    <property type="nucleotide sequence ID" value="NC_006300.1"/>
</dbReference>
<dbReference type="SMR" id="Q65VN2"/>
<dbReference type="STRING" id="221988.MS0371"/>
<dbReference type="KEGG" id="msu:MS0371"/>
<dbReference type="eggNOG" id="COG0481">
    <property type="taxonomic scope" value="Bacteria"/>
</dbReference>
<dbReference type="HOGENOM" id="CLU_009995_3_3_6"/>
<dbReference type="OrthoDB" id="9804431at2"/>
<dbReference type="Proteomes" id="UP000000607">
    <property type="component" value="Chromosome"/>
</dbReference>
<dbReference type="GO" id="GO:0005886">
    <property type="term" value="C:plasma membrane"/>
    <property type="evidence" value="ECO:0007669"/>
    <property type="project" value="UniProtKB-SubCell"/>
</dbReference>
<dbReference type="GO" id="GO:0005525">
    <property type="term" value="F:GTP binding"/>
    <property type="evidence" value="ECO:0007669"/>
    <property type="project" value="UniProtKB-UniRule"/>
</dbReference>
<dbReference type="GO" id="GO:0003924">
    <property type="term" value="F:GTPase activity"/>
    <property type="evidence" value="ECO:0007669"/>
    <property type="project" value="UniProtKB-UniRule"/>
</dbReference>
<dbReference type="GO" id="GO:0097216">
    <property type="term" value="F:guanosine tetraphosphate binding"/>
    <property type="evidence" value="ECO:0007669"/>
    <property type="project" value="UniProtKB-ARBA"/>
</dbReference>
<dbReference type="GO" id="GO:0043022">
    <property type="term" value="F:ribosome binding"/>
    <property type="evidence" value="ECO:0007669"/>
    <property type="project" value="UniProtKB-UniRule"/>
</dbReference>
<dbReference type="GO" id="GO:0003746">
    <property type="term" value="F:translation elongation factor activity"/>
    <property type="evidence" value="ECO:0007669"/>
    <property type="project" value="UniProtKB-UniRule"/>
</dbReference>
<dbReference type="GO" id="GO:0045727">
    <property type="term" value="P:positive regulation of translation"/>
    <property type="evidence" value="ECO:0007669"/>
    <property type="project" value="UniProtKB-UniRule"/>
</dbReference>
<dbReference type="CDD" id="cd03699">
    <property type="entry name" value="EF4_II"/>
    <property type="match status" value="1"/>
</dbReference>
<dbReference type="CDD" id="cd16260">
    <property type="entry name" value="EF4_III"/>
    <property type="match status" value="1"/>
</dbReference>
<dbReference type="CDD" id="cd01890">
    <property type="entry name" value="LepA"/>
    <property type="match status" value="1"/>
</dbReference>
<dbReference type="CDD" id="cd03709">
    <property type="entry name" value="lepA_C"/>
    <property type="match status" value="1"/>
</dbReference>
<dbReference type="FunFam" id="3.30.70.240:FF:000005">
    <property type="entry name" value="Elongation factor 4"/>
    <property type="match status" value="1"/>
</dbReference>
<dbReference type="FunFam" id="3.40.50.300:FF:000078">
    <property type="entry name" value="Elongation factor 4"/>
    <property type="match status" value="1"/>
</dbReference>
<dbReference type="FunFam" id="2.40.30.10:FF:000015">
    <property type="entry name" value="Translation factor GUF1, mitochondrial"/>
    <property type="match status" value="1"/>
</dbReference>
<dbReference type="FunFam" id="3.30.70.2570:FF:000001">
    <property type="entry name" value="Translation factor GUF1, mitochondrial"/>
    <property type="match status" value="1"/>
</dbReference>
<dbReference type="FunFam" id="3.30.70.870:FF:000004">
    <property type="entry name" value="Translation factor GUF1, mitochondrial"/>
    <property type="match status" value="1"/>
</dbReference>
<dbReference type="Gene3D" id="3.30.70.240">
    <property type="match status" value="1"/>
</dbReference>
<dbReference type="Gene3D" id="3.30.70.2570">
    <property type="entry name" value="Elongation factor 4, C-terminal domain"/>
    <property type="match status" value="1"/>
</dbReference>
<dbReference type="Gene3D" id="3.30.70.870">
    <property type="entry name" value="Elongation Factor G (Translational Gtpase), domain 3"/>
    <property type="match status" value="1"/>
</dbReference>
<dbReference type="Gene3D" id="3.40.50.300">
    <property type="entry name" value="P-loop containing nucleotide triphosphate hydrolases"/>
    <property type="match status" value="1"/>
</dbReference>
<dbReference type="Gene3D" id="2.40.30.10">
    <property type="entry name" value="Translation factors"/>
    <property type="match status" value="1"/>
</dbReference>
<dbReference type="HAMAP" id="MF_00071">
    <property type="entry name" value="LepA"/>
    <property type="match status" value="1"/>
</dbReference>
<dbReference type="InterPro" id="IPR006297">
    <property type="entry name" value="EF-4"/>
</dbReference>
<dbReference type="InterPro" id="IPR035647">
    <property type="entry name" value="EFG_III/V"/>
</dbReference>
<dbReference type="InterPro" id="IPR000640">
    <property type="entry name" value="EFG_V-like"/>
</dbReference>
<dbReference type="InterPro" id="IPR004161">
    <property type="entry name" value="EFTu-like_2"/>
</dbReference>
<dbReference type="InterPro" id="IPR031157">
    <property type="entry name" value="G_TR_CS"/>
</dbReference>
<dbReference type="InterPro" id="IPR038363">
    <property type="entry name" value="LepA_C_sf"/>
</dbReference>
<dbReference type="InterPro" id="IPR013842">
    <property type="entry name" value="LepA_CTD"/>
</dbReference>
<dbReference type="InterPro" id="IPR035654">
    <property type="entry name" value="LepA_IV"/>
</dbReference>
<dbReference type="InterPro" id="IPR027417">
    <property type="entry name" value="P-loop_NTPase"/>
</dbReference>
<dbReference type="InterPro" id="IPR005225">
    <property type="entry name" value="Small_GTP-bd"/>
</dbReference>
<dbReference type="InterPro" id="IPR000795">
    <property type="entry name" value="T_Tr_GTP-bd_dom"/>
</dbReference>
<dbReference type="NCBIfam" id="TIGR01393">
    <property type="entry name" value="lepA"/>
    <property type="match status" value="1"/>
</dbReference>
<dbReference type="NCBIfam" id="TIGR00231">
    <property type="entry name" value="small_GTP"/>
    <property type="match status" value="1"/>
</dbReference>
<dbReference type="PANTHER" id="PTHR43512:SF4">
    <property type="entry name" value="TRANSLATION FACTOR GUF1 HOMOLOG, CHLOROPLASTIC"/>
    <property type="match status" value="1"/>
</dbReference>
<dbReference type="PANTHER" id="PTHR43512">
    <property type="entry name" value="TRANSLATION FACTOR GUF1-RELATED"/>
    <property type="match status" value="1"/>
</dbReference>
<dbReference type="Pfam" id="PF00679">
    <property type="entry name" value="EFG_C"/>
    <property type="match status" value="1"/>
</dbReference>
<dbReference type="Pfam" id="PF00009">
    <property type="entry name" value="GTP_EFTU"/>
    <property type="match status" value="1"/>
</dbReference>
<dbReference type="Pfam" id="PF03144">
    <property type="entry name" value="GTP_EFTU_D2"/>
    <property type="match status" value="1"/>
</dbReference>
<dbReference type="Pfam" id="PF06421">
    <property type="entry name" value="LepA_C"/>
    <property type="match status" value="1"/>
</dbReference>
<dbReference type="PRINTS" id="PR00315">
    <property type="entry name" value="ELONGATNFCT"/>
</dbReference>
<dbReference type="SUPFAM" id="SSF54980">
    <property type="entry name" value="EF-G C-terminal domain-like"/>
    <property type="match status" value="2"/>
</dbReference>
<dbReference type="SUPFAM" id="SSF52540">
    <property type="entry name" value="P-loop containing nucleoside triphosphate hydrolases"/>
    <property type="match status" value="1"/>
</dbReference>
<dbReference type="PROSITE" id="PS00301">
    <property type="entry name" value="G_TR_1"/>
    <property type="match status" value="1"/>
</dbReference>
<dbReference type="PROSITE" id="PS51722">
    <property type="entry name" value="G_TR_2"/>
    <property type="match status" value="1"/>
</dbReference>